<evidence type="ECO:0000250" key="1"/>
<evidence type="ECO:0000255" key="2"/>
<evidence type="ECO:0000255" key="3">
    <source>
        <dbReference type="PROSITE-ProRule" id="PRU00448"/>
    </source>
</evidence>
<evidence type="ECO:0000255" key="4">
    <source>
        <dbReference type="PROSITE-ProRule" id="PRU00798"/>
    </source>
</evidence>
<evidence type="ECO:0000256" key="5">
    <source>
        <dbReference type="SAM" id="MobiDB-lite"/>
    </source>
</evidence>
<evidence type="ECO:0000305" key="6"/>
<comment type="subcellular location">
    <subcellularLocation>
        <location evidence="6">Secreted</location>
    </subcellularLocation>
</comment>
<gene>
    <name type="primary">Fstl4</name>
    <name type="synonym">Kiaa1061</name>
</gene>
<proteinExistence type="evidence at transcript level"/>
<dbReference type="EMBL" id="AF374459">
    <property type="protein sequence ID" value="AAQ02777.1"/>
    <property type="molecule type" value="mRNA"/>
</dbReference>
<dbReference type="EMBL" id="AL596382">
    <property type="status" value="NOT_ANNOTATED_CDS"/>
    <property type="molecule type" value="Genomic_DNA"/>
</dbReference>
<dbReference type="EMBL" id="AL604002">
    <property type="status" value="NOT_ANNOTATED_CDS"/>
    <property type="molecule type" value="Genomic_DNA"/>
</dbReference>
<dbReference type="EMBL" id="AL662836">
    <property type="status" value="NOT_ANNOTATED_CDS"/>
    <property type="molecule type" value="Genomic_DNA"/>
</dbReference>
<dbReference type="EMBL" id="AL662855">
    <property type="status" value="NOT_ANNOTATED_CDS"/>
    <property type="molecule type" value="Genomic_DNA"/>
</dbReference>
<dbReference type="EMBL" id="BC132353">
    <property type="protein sequence ID" value="AAI32354.1"/>
    <property type="molecule type" value="mRNA"/>
</dbReference>
<dbReference type="EMBL" id="AK220367">
    <property type="protein sequence ID" value="BAD90427.1"/>
    <property type="molecule type" value="mRNA"/>
</dbReference>
<dbReference type="CCDS" id="CCDS24673.1"/>
<dbReference type="RefSeq" id="NP_796033.2">
    <property type="nucleotide sequence ID" value="NM_177059.4"/>
</dbReference>
<dbReference type="SMR" id="Q5STE3"/>
<dbReference type="FunCoup" id="Q5STE3">
    <property type="interactions" value="173"/>
</dbReference>
<dbReference type="STRING" id="10090.ENSMUSP00000042007"/>
<dbReference type="GlyCosmos" id="Q5STE3">
    <property type="glycosylation" value="1 site, No reported glycans"/>
</dbReference>
<dbReference type="GlyGen" id="Q5STE3">
    <property type="glycosylation" value="5 sites, 3 N-linked glycans (3 sites)"/>
</dbReference>
<dbReference type="PhosphoSitePlus" id="Q5STE3"/>
<dbReference type="PaxDb" id="10090-ENSMUSP00000042007"/>
<dbReference type="ProteomicsDB" id="266875"/>
<dbReference type="Antibodypedia" id="26231">
    <property type="antibodies" value="43 antibodies from 15 providers"/>
</dbReference>
<dbReference type="DNASU" id="320027"/>
<dbReference type="Ensembl" id="ENSMUST00000036796.8">
    <property type="protein sequence ID" value="ENSMUSP00000042007.8"/>
    <property type="gene ID" value="ENSMUSG00000036264.10"/>
</dbReference>
<dbReference type="GeneID" id="320027"/>
<dbReference type="KEGG" id="mmu:320027"/>
<dbReference type="UCSC" id="uc007ivp.1">
    <property type="organism name" value="mouse"/>
</dbReference>
<dbReference type="AGR" id="MGI:2443199"/>
<dbReference type="CTD" id="23105"/>
<dbReference type="MGI" id="MGI:2443199">
    <property type="gene designation" value="Fstl4"/>
</dbReference>
<dbReference type="VEuPathDB" id="HostDB:ENSMUSG00000036264"/>
<dbReference type="eggNOG" id="ENOG502QPNV">
    <property type="taxonomic scope" value="Eukaryota"/>
</dbReference>
<dbReference type="GeneTree" id="ENSGT00940000158076"/>
<dbReference type="HOGENOM" id="CLU_007849_0_0_1"/>
<dbReference type="InParanoid" id="Q5STE3"/>
<dbReference type="OMA" id="RYLPVCG"/>
<dbReference type="OrthoDB" id="6085115at2759"/>
<dbReference type="PhylomeDB" id="Q5STE3"/>
<dbReference type="TreeFam" id="TF350473"/>
<dbReference type="BioGRID-ORCS" id="320027">
    <property type="hits" value="3 hits in 79 CRISPR screens"/>
</dbReference>
<dbReference type="ChiTaRS" id="Fstl4">
    <property type="organism name" value="mouse"/>
</dbReference>
<dbReference type="PRO" id="PR:Q5STE3"/>
<dbReference type="Proteomes" id="UP000000589">
    <property type="component" value="Chromosome 11"/>
</dbReference>
<dbReference type="RNAct" id="Q5STE3">
    <property type="molecule type" value="protein"/>
</dbReference>
<dbReference type="Bgee" id="ENSMUSG00000036264">
    <property type="expression patterns" value="Expressed in secondary oocyte and 37 other cell types or tissues"/>
</dbReference>
<dbReference type="GO" id="GO:0005576">
    <property type="term" value="C:extracellular region"/>
    <property type="evidence" value="ECO:0007669"/>
    <property type="project" value="UniProtKB-SubCell"/>
</dbReference>
<dbReference type="GO" id="GO:0030141">
    <property type="term" value="C:secretory granule"/>
    <property type="evidence" value="ECO:0000314"/>
    <property type="project" value="MGI"/>
</dbReference>
<dbReference type="GO" id="GO:0048403">
    <property type="term" value="F:brain-derived neurotrophic factor binding"/>
    <property type="evidence" value="ECO:0000314"/>
    <property type="project" value="MGI"/>
</dbReference>
<dbReference type="GO" id="GO:0005509">
    <property type="term" value="F:calcium ion binding"/>
    <property type="evidence" value="ECO:0007669"/>
    <property type="project" value="InterPro"/>
</dbReference>
<dbReference type="GO" id="GO:0031549">
    <property type="term" value="P:negative regulation of brain-derived neurotrophic factor receptor signaling pathway"/>
    <property type="evidence" value="ECO:0000315"/>
    <property type="project" value="MGI"/>
</dbReference>
<dbReference type="GO" id="GO:0048671">
    <property type="term" value="P:negative regulation of collateral sprouting"/>
    <property type="evidence" value="ECO:0000315"/>
    <property type="project" value="MGI"/>
</dbReference>
<dbReference type="GO" id="GO:0061000">
    <property type="term" value="P:negative regulation of dendritic spine development"/>
    <property type="evidence" value="ECO:0000315"/>
    <property type="project" value="MGI"/>
</dbReference>
<dbReference type="GO" id="GO:0048670">
    <property type="term" value="P:regulation of collateral sprouting"/>
    <property type="evidence" value="ECO:0000316"/>
    <property type="project" value="MGI"/>
</dbReference>
<dbReference type="CDD" id="cd00096">
    <property type="entry name" value="Ig"/>
    <property type="match status" value="1"/>
</dbReference>
<dbReference type="CDD" id="cd05736">
    <property type="entry name" value="IgI_2_Follistatin_like"/>
    <property type="match status" value="1"/>
</dbReference>
<dbReference type="CDD" id="cd00104">
    <property type="entry name" value="KAZAL_FS"/>
    <property type="match status" value="1"/>
</dbReference>
<dbReference type="FunFam" id="2.60.40.10:FF:000653">
    <property type="entry name" value="Follistatin like 4"/>
    <property type="match status" value="1"/>
</dbReference>
<dbReference type="FunFam" id="2.60.40.10:FF:002358">
    <property type="entry name" value="Follistatin like 4"/>
    <property type="match status" value="1"/>
</dbReference>
<dbReference type="FunFam" id="3.30.60.30:FF:000007">
    <property type="entry name" value="follistatin-related protein 5 isoform X1"/>
    <property type="match status" value="1"/>
</dbReference>
<dbReference type="Gene3D" id="3.30.60.30">
    <property type="match status" value="1"/>
</dbReference>
<dbReference type="Gene3D" id="1.10.238.10">
    <property type="entry name" value="EF-hand"/>
    <property type="match status" value="1"/>
</dbReference>
<dbReference type="Gene3D" id="2.60.40.10">
    <property type="entry name" value="Immunoglobulins"/>
    <property type="match status" value="2"/>
</dbReference>
<dbReference type="Gene3D" id="2.130.10.10">
    <property type="entry name" value="YVTN repeat-like/Quinoprotein amine dehydrogenase"/>
    <property type="match status" value="1"/>
</dbReference>
<dbReference type="InterPro" id="IPR011992">
    <property type="entry name" value="EF-hand-dom_pair"/>
</dbReference>
<dbReference type="InterPro" id="IPR018247">
    <property type="entry name" value="EF_Hand_1_Ca_BS"/>
</dbReference>
<dbReference type="InterPro" id="IPR002048">
    <property type="entry name" value="EF_hand_dom"/>
</dbReference>
<dbReference type="InterPro" id="IPR007110">
    <property type="entry name" value="Ig-like_dom"/>
</dbReference>
<dbReference type="InterPro" id="IPR036179">
    <property type="entry name" value="Ig-like_dom_sf"/>
</dbReference>
<dbReference type="InterPro" id="IPR013783">
    <property type="entry name" value="Ig-like_fold"/>
</dbReference>
<dbReference type="InterPro" id="IPR003599">
    <property type="entry name" value="Ig_sub"/>
</dbReference>
<dbReference type="InterPro" id="IPR003598">
    <property type="entry name" value="Ig_sub2"/>
</dbReference>
<dbReference type="InterPro" id="IPR002350">
    <property type="entry name" value="Kazal_dom"/>
</dbReference>
<dbReference type="InterPro" id="IPR036058">
    <property type="entry name" value="Kazal_dom_sf"/>
</dbReference>
<dbReference type="InterPro" id="IPR050653">
    <property type="entry name" value="Prot_Inhib_GrowthFact_Antg"/>
</dbReference>
<dbReference type="InterPro" id="IPR015943">
    <property type="entry name" value="WD40/YVTN_repeat-like_dom_sf"/>
</dbReference>
<dbReference type="PANTHER" id="PTHR10913">
    <property type="entry name" value="FOLLISTATIN-RELATED"/>
    <property type="match status" value="1"/>
</dbReference>
<dbReference type="PANTHER" id="PTHR10913:SF9">
    <property type="entry name" value="FOLLISTATIN-RELATED PROTEIN 4"/>
    <property type="match status" value="1"/>
</dbReference>
<dbReference type="Pfam" id="PF13927">
    <property type="entry name" value="Ig_3"/>
    <property type="match status" value="2"/>
</dbReference>
<dbReference type="Pfam" id="PF07648">
    <property type="entry name" value="Kazal_2"/>
    <property type="match status" value="1"/>
</dbReference>
<dbReference type="SMART" id="SM00409">
    <property type="entry name" value="IG"/>
    <property type="match status" value="2"/>
</dbReference>
<dbReference type="SMART" id="SM00408">
    <property type="entry name" value="IGc2"/>
    <property type="match status" value="2"/>
</dbReference>
<dbReference type="SMART" id="SM00280">
    <property type="entry name" value="KAZAL"/>
    <property type="match status" value="1"/>
</dbReference>
<dbReference type="SUPFAM" id="SSF75011">
    <property type="entry name" value="3-carboxy-cis,cis-mucoante lactonizing enzyme"/>
    <property type="match status" value="1"/>
</dbReference>
<dbReference type="SUPFAM" id="SSF47473">
    <property type="entry name" value="EF-hand"/>
    <property type="match status" value="1"/>
</dbReference>
<dbReference type="SUPFAM" id="SSF48726">
    <property type="entry name" value="Immunoglobulin"/>
    <property type="match status" value="2"/>
</dbReference>
<dbReference type="SUPFAM" id="SSF100895">
    <property type="entry name" value="Kazal-type serine protease inhibitors"/>
    <property type="match status" value="1"/>
</dbReference>
<dbReference type="PROSITE" id="PS00018">
    <property type="entry name" value="EF_HAND_1"/>
    <property type="match status" value="2"/>
</dbReference>
<dbReference type="PROSITE" id="PS50222">
    <property type="entry name" value="EF_HAND_2"/>
    <property type="match status" value="2"/>
</dbReference>
<dbReference type="PROSITE" id="PS50835">
    <property type="entry name" value="IG_LIKE"/>
    <property type="match status" value="2"/>
</dbReference>
<dbReference type="PROSITE" id="PS51465">
    <property type="entry name" value="KAZAL_2"/>
    <property type="match status" value="1"/>
</dbReference>
<keyword id="KW-0106">Calcium</keyword>
<keyword id="KW-1015">Disulfide bond</keyword>
<keyword id="KW-0325">Glycoprotein</keyword>
<keyword id="KW-0393">Immunoglobulin domain</keyword>
<keyword id="KW-0479">Metal-binding</keyword>
<keyword id="KW-1185">Reference proteome</keyword>
<keyword id="KW-0677">Repeat</keyword>
<keyword id="KW-0964">Secreted</keyword>
<keyword id="KW-0732">Signal</keyword>
<accession>Q5STE3</accession>
<accession>A2RT35</accession>
<accession>Q5DU03</accession>
<reference key="1">
    <citation type="submission" date="2001-04" db="EMBL/GenBank/DDBJ databases">
        <title>Identification of m-D/Bsp120I 1-1.</title>
        <authorList>
            <person name="Kato A."/>
            <person name="Noda M."/>
        </authorList>
    </citation>
    <scope>NUCLEOTIDE SEQUENCE [MRNA]</scope>
</reference>
<reference key="2">
    <citation type="journal article" date="2009" name="PLoS Biol.">
        <title>Lineage-specific biology revealed by a finished genome assembly of the mouse.</title>
        <authorList>
            <person name="Church D.M."/>
            <person name="Goodstadt L."/>
            <person name="Hillier L.W."/>
            <person name="Zody M.C."/>
            <person name="Goldstein S."/>
            <person name="She X."/>
            <person name="Bult C.J."/>
            <person name="Agarwala R."/>
            <person name="Cherry J.L."/>
            <person name="DiCuccio M."/>
            <person name="Hlavina W."/>
            <person name="Kapustin Y."/>
            <person name="Meric P."/>
            <person name="Maglott D."/>
            <person name="Birtle Z."/>
            <person name="Marques A.C."/>
            <person name="Graves T."/>
            <person name="Zhou S."/>
            <person name="Teague B."/>
            <person name="Potamousis K."/>
            <person name="Churas C."/>
            <person name="Place M."/>
            <person name="Herschleb J."/>
            <person name="Runnheim R."/>
            <person name="Forrest D."/>
            <person name="Amos-Landgraf J."/>
            <person name="Schwartz D.C."/>
            <person name="Cheng Z."/>
            <person name="Lindblad-Toh K."/>
            <person name="Eichler E.E."/>
            <person name="Ponting C.P."/>
        </authorList>
    </citation>
    <scope>NUCLEOTIDE SEQUENCE [LARGE SCALE GENOMIC DNA]</scope>
    <source>
        <strain>C57BL/6J</strain>
    </source>
</reference>
<reference key="3">
    <citation type="journal article" date="2004" name="Genome Res.">
        <title>The status, quality, and expansion of the NIH full-length cDNA project: the Mammalian Gene Collection (MGC).</title>
        <authorList>
            <consortium name="The MGC Project Team"/>
        </authorList>
    </citation>
    <scope>NUCLEOTIDE SEQUENCE [LARGE SCALE MRNA]</scope>
    <source>
        <tissue>Brain</tissue>
    </source>
</reference>
<reference key="4">
    <citation type="submission" date="2005-02" db="EMBL/GenBank/DDBJ databases">
        <title>Prediction of the coding sequences of mouse homologues of KIAA gene. The complete nucleotide sequences of mouse KIAA-homologous cDNAs identified by screening of terminal sequences of cDNA clones randomly sampled from size-fractionated libraries.</title>
        <authorList>
            <person name="Okazaki N."/>
            <person name="Kikuno R.F."/>
            <person name="Ohara R."/>
            <person name="Inamoto S."/>
            <person name="Nagase T."/>
            <person name="Ohara O."/>
            <person name="Koga H."/>
        </authorList>
    </citation>
    <scope>NUCLEOTIDE SEQUENCE [LARGE SCALE MRNA] OF 146-841</scope>
    <source>
        <tissue>Brain</tissue>
    </source>
</reference>
<protein>
    <recommendedName>
        <fullName>Follistatin-related protein 4</fullName>
    </recommendedName>
    <alternativeName>
        <fullName>Follistatin-like protein 4</fullName>
    </alternativeName>
    <alternativeName>
        <fullName>m-D/Bsp120I 1-1</fullName>
    </alternativeName>
</protein>
<feature type="signal peptide" evidence="2">
    <location>
        <begin position="1"/>
        <end position="22"/>
    </location>
</feature>
<feature type="chain" id="PRO_0000251926" description="Follistatin-related protein 4">
    <location>
        <begin position="23"/>
        <end position="841"/>
    </location>
</feature>
<feature type="domain" description="Kazal-like" evidence="4">
    <location>
        <begin position="80"/>
        <end position="134"/>
    </location>
</feature>
<feature type="domain" description="EF-hand 1" evidence="3">
    <location>
        <begin position="173"/>
        <end position="208"/>
    </location>
</feature>
<feature type="domain" description="EF-hand 2" evidence="3">
    <location>
        <begin position="225"/>
        <end position="247"/>
    </location>
</feature>
<feature type="domain" description="Ig-like 1">
    <location>
        <begin position="250"/>
        <end position="336"/>
    </location>
</feature>
<feature type="domain" description="Ig-like 2">
    <location>
        <begin position="340"/>
        <end position="425"/>
    </location>
</feature>
<feature type="region of interest" description="Disordered" evidence="5">
    <location>
        <begin position="29"/>
        <end position="54"/>
    </location>
</feature>
<feature type="compositionally biased region" description="Basic and acidic residues" evidence="5">
    <location>
        <begin position="42"/>
        <end position="54"/>
    </location>
</feature>
<feature type="binding site" evidence="3">
    <location>
        <position position="186"/>
    </location>
    <ligand>
        <name>Ca(2+)</name>
        <dbReference type="ChEBI" id="CHEBI:29108"/>
        <label>1</label>
    </ligand>
</feature>
<feature type="binding site" evidence="3">
    <location>
        <position position="188"/>
    </location>
    <ligand>
        <name>Ca(2+)</name>
        <dbReference type="ChEBI" id="CHEBI:29108"/>
        <label>1</label>
    </ligand>
</feature>
<feature type="binding site" evidence="3">
    <location>
        <position position="190"/>
    </location>
    <ligand>
        <name>Ca(2+)</name>
        <dbReference type="ChEBI" id="CHEBI:29108"/>
        <label>1</label>
    </ligand>
</feature>
<feature type="binding site" evidence="3">
    <location>
        <position position="192"/>
    </location>
    <ligand>
        <name>Ca(2+)</name>
        <dbReference type="ChEBI" id="CHEBI:29108"/>
        <label>1</label>
    </ligand>
</feature>
<feature type="binding site" evidence="3">
    <location>
        <position position="197"/>
    </location>
    <ligand>
        <name>Ca(2+)</name>
        <dbReference type="ChEBI" id="CHEBI:29108"/>
        <label>1</label>
    </ligand>
</feature>
<feature type="binding site" evidence="3">
    <location>
        <position position="225"/>
    </location>
    <ligand>
        <name>Ca(2+)</name>
        <dbReference type="ChEBI" id="CHEBI:29108"/>
        <label>2</label>
    </ligand>
</feature>
<feature type="binding site" evidence="3">
    <location>
        <position position="227"/>
    </location>
    <ligand>
        <name>Ca(2+)</name>
        <dbReference type="ChEBI" id="CHEBI:29108"/>
        <label>2</label>
    </ligand>
</feature>
<feature type="binding site" evidence="3">
    <location>
        <position position="229"/>
    </location>
    <ligand>
        <name>Ca(2+)</name>
        <dbReference type="ChEBI" id="CHEBI:29108"/>
        <label>2</label>
    </ligand>
</feature>
<feature type="binding site" evidence="3">
    <location>
        <position position="231"/>
    </location>
    <ligand>
        <name>Ca(2+)</name>
        <dbReference type="ChEBI" id="CHEBI:29108"/>
        <label>2</label>
    </ligand>
</feature>
<feature type="binding site" evidence="3">
    <location>
        <position position="236"/>
    </location>
    <ligand>
        <name>Ca(2+)</name>
        <dbReference type="ChEBI" id="CHEBI:29108"/>
        <label>2</label>
    </ligand>
</feature>
<feature type="glycosylation site" description="N-linked (GlcNAc...) asparagine" evidence="2">
    <location>
        <position position="317"/>
    </location>
</feature>
<feature type="disulfide bond" evidence="4">
    <location>
        <begin position="86"/>
        <end position="118"/>
    </location>
</feature>
<feature type="disulfide bond" evidence="4">
    <location>
        <begin position="92"/>
        <end position="111"/>
    </location>
</feature>
<feature type="disulfide bond" evidence="4">
    <location>
        <begin position="100"/>
        <end position="132"/>
    </location>
</feature>
<feature type="disulfide bond" evidence="1">
    <location>
        <begin position="269"/>
        <end position="320"/>
    </location>
</feature>
<feature type="disulfide bond" evidence="1">
    <location>
        <begin position="361"/>
        <end position="412"/>
    </location>
</feature>
<feature type="sequence conflict" description="In Ref. 4; BAD90427." evidence="6" ref="4">
    <original>E</original>
    <variation>K</variation>
    <location>
        <position position="251"/>
    </location>
</feature>
<name>FSTL4_MOUSE</name>
<organism>
    <name type="scientific">Mus musculus</name>
    <name type="common">Mouse</name>
    <dbReference type="NCBI Taxonomy" id="10090"/>
    <lineage>
        <taxon>Eukaryota</taxon>
        <taxon>Metazoa</taxon>
        <taxon>Chordata</taxon>
        <taxon>Craniata</taxon>
        <taxon>Vertebrata</taxon>
        <taxon>Euteleostomi</taxon>
        <taxon>Mammalia</taxon>
        <taxon>Eutheria</taxon>
        <taxon>Euarchontoglires</taxon>
        <taxon>Glires</taxon>
        <taxon>Rodentia</taxon>
        <taxon>Myomorpha</taxon>
        <taxon>Muroidea</taxon>
        <taxon>Muridae</taxon>
        <taxon>Murinae</taxon>
        <taxon>Mus</taxon>
        <taxon>Mus</taxon>
    </lineage>
</organism>
<sequence length="841" mass="92579">MKPGGFWPHLALLGVSLPAVLGWMDQGASRSPNMVPGESQAEETRGFEVTRREGLPSPGLSASCGKKLCSHGSRCLLNRTTGQPSCQCLEVCRPRYMPVCGSDGRLYGNHCELRRAACLLGKRIVSVHSKDCFLKGDMCTMAGYARLKNVLLALQSRRQPLPQGTPRQSLASQKRLLVESLFKDLDADGNGHLGSLELAQYVLKEQDMDGSLNRCSPSDLLRFDDYNSDGSLTLGEFYTAFQVIQLSLAPEDKVSVTTVTVGLSTVLTCAIRGDLRPPIIWKRNGLTLSFLGLEDINDFGEDGSLYITKVTTVHMGNYTCHALGHEQLVQTHVLQVNVPPVIRVYPETQAQEPGVAASLRCHAEGIPLPRIIWLKNGMDVSTQMSKQLSLLANGSELHIGSVRYEDTGAYTCIAKNEVGVDEDISSLFIEDSARKTLANILWREEGLSVGNMFYVFAEDGIVVIHPVDCEVQRRLKPTEKIFMSYEEICPRVEGDATQPCQWASAVNVRNRYIYVAQPALNRVLVVDVQAQKVLQSIGVDPLPVKLSYDKSHDQVWVLSWGDMHKSQPSLQVITEASTGQGQHLIRTPFAGVDNFFIPPTNLIINHIRFGFIFNKTDPAVHKVDLETLMALKTISLRHYGCMPQAMAHTHLGGYFFVQCQQDTPTSTGPQLLIDSVTDSVLGPNSDITGTPHVSPDGRFIVSVSNKGPWLHVQEVTVRGEIQTLYDLKINPGISDLAFQHSFTEGSQYNAYATLDKEPDLLFLELSTGKMGRLKNLKEPPRGPAPTWGGPRRVLRDSGLFGQYLLTPAQESLFLVNGRQNALRCEVSGIKGAATVVWVGEV</sequence>